<dbReference type="EMBL" id="AE017262">
    <property type="protein sequence ID" value="AAT05425.1"/>
    <property type="molecule type" value="Genomic_DNA"/>
</dbReference>
<dbReference type="RefSeq" id="WP_003724987.1">
    <property type="nucleotide sequence ID" value="NC_002973.6"/>
</dbReference>
<dbReference type="SMR" id="Q71W91"/>
<dbReference type="KEGG" id="lmf:LMOf2365_2660"/>
<dbReference type="HOGENOM" id="CLU_077094_2_0_9"/>
<dbReference type="GO" id="GO:0005886">
    <property type="term" value="C:plasma membrane"/>
    <property type="evidence" value="ECO:0007669"/>
    <property type="project" value="UniProtKB-SubCell"/>
</dbReference>
<dbReference type="GO" id="GO:0005524">
    <property type="term" value="F:ATP binding"/>
    <property type="evidence" value="ECO:0007669"/>
    <property type="project" value="UniProtKB-UniRule"/>
</dbReference>
<dbReference type="GO" id="GO:0008556">
    <property type="term" value="F:P-type potassium transmembrane transporter activity"/>
    <property type="evidence" value="ECO:0007669"/>
    <property type="project" value="InterPro"/>
</dbReference>
<dbReference type="HAMAP" id="MF_00276">
    <property type="entry name" value="KdpC"/>
    <property type="match status" value="1"/>
</dbReference>
<dbReference type="InterPro" id="IPR003820">
    <property type="entry name" value="KdpC"/>
</dbReference>
<dbReference type="NCBIfam" id="TIGR00681">
    <property type="entry name" value="kdpC"/>
    <property type="match status" value="1"/>
</dbReference>
<dbReference type="PANTHER" id="PTHR30042">
    <property type="entry name" value="POTASSIUM-TRANSPORTING ATPASE C CHAIN"/>
    <property type="match status" value="1"/>
</dbReference>
<dbReference type="PANTHER" id="PTHR30042:SF2">
    <property type="entry name" value="POTASSIUM-TRANSPORTING ATPASE KDPC SUBUNIT"/>
    <property type="match status" value="1"/>
</dbReference>
<dbReference type="Pfam" id="PF02669">
    <property type="entry name" value="KdpC"/>
    <property type="match status" value="1"/>
</dbReference>
<dbReference type="PIRSF" id="PIRSF001296">
    <property type="entry name" value="K_ATPase_KdpC"/>
    <property type="match status" value="1"/>
</dbReference>
<proteinExistence type="inferred from homology"/>
<accession>Q71W91</accession>
<organism>
    <name type="scientific">Listeria monocytogenes serotype 4b (strain F2365)</name>
    <dbReference type="NCBI Taxonomy" id="265669"/>
    <lineage>
        <taxon>Bacteria</taxon>
        <taxon>Bacillati</taxon>
        <taxon>Bacillota</taxon>
        <taxon>Bacilli</taxon>
        <taxon>Bacillales</taxon>
        <taxon>Listeriaceae</taxon>
        <taxon>Listeria</taxon>
    </lineage>
</organism>
<evidence type="ECO:0000255" key="1">
    <source>
        <dbReference type="HAMAP-Rule" id="MF_00276"/>
    </source>
</evidence>
<sequence>MKRFMQIWKPAVVGFLLLTLMCGVVYPGIVTIFASAAFHDKANGSIIEEKRADGTTGKVGSAEIGQTFTKPEYLIGRAASDGVATNLNPTSEEQKQLVEKRIAWWHKLDPTNNRVIPMDLVTASASGVDPDISEAAAAYQVDRISRERGISTKQVKEIIAEHTSDRLLGFWGEPTVNVLQVNLALDRLKM</sequence>
<name>KDPC_LISMF</name>
<comment type="function">
    <text evidence="1">Part of the high-affinity ATP-driven potassium transport (or Kdp) system, which catalyzes the hydrolysis of ATP coupled with the electrogenic transport of potassium into the cytoplasm. This subunit acts as a catalytic chaperone that increases the ATP-binding affinity of the ATP-hydrolyzing subunit KdpB by the formation of a transient KdpB/KdpC/ATP ternary complex.</text>
</comment>
<comment type="subunit">
    <text evidence="1">The system is composed of three essential subunits: KdpA, KdpB and KdpC.</text>
</comment>
<comment type="subcellular location">
    <subcellularLocation>
        <location evidence="1">Cell membrane</location>
        <topology evidence="1">Single-pass membrane protein</topology>
    </subcellularLocation>
</comment>
<comment type="similarity">
    <text evidence="1">Belongs to the KdpC family.</text>
</comment>
<feature type="chain" id="PRO_0000196997" description="Potassium-transporting ATPase KdpC subunit">
    <location>
        <begin position="1"/>
        <end position="190"/>
    </location>
</feature>
<feature type="transmembrane region" description="Helical" evidence="1">
    <location>
        <begin position="13"/>
        <end position="33"/>
    </location>
</feature>
<reference key="1">
    <citation type="journal article" date="2004" name="Nucleic Acids Res.">
        <title>Whole genome comparisons of serotype 4b and 1/2a strains of the food-borne pathogen Listeria monocytogenes reveal new insights into the core genome components of this species.</title>
        <authorList>
            <person name="Nelson K.E."/>
            <person name="Fouts D.E."/>
            <person name="Mongodin E.F."/>
            <person name="Ravel J."/>
            <person name="DeBoy R.T."/>
            <person name="Kolonay J.F."/>
            <person name="Rasko D.A."/>
            <person name="Angiuoli S.V."/>
            <person name="Gill S.R."/>
            <person name="Paulsen I.T."/>
            <person name="Peterson J.D."/>
            <person name="White O."/>
            <person name="Nelson W.C."/>
            <person name="Nierman W.C."/>
            <person name="Beanan M.J."/>
            <person name="Brinkac L.M."/>
            <person name="Daugherty S.C."/>
            <person name="Dodson R.J."/>
            <person name="Durkin A.S."/>
            <person name="Madupu R."/>
            <person name="Haft D.H."/>
            <person name="Selengut J."/>
            <person name="Van Aken S.E."/>
            <person name="Khouri H.M."/>
            <person name="Fedorova N."/>
            <person name="Forberger H.A."/>
            <person name="Tran B."/>
            <person name="Kathariou S."/>
            <person name="Wonderling L.D."/>
            <person name="Uhlich G.A."/>
            <person name="Bayles D.O."/>
            <person name="Luchansky J.B."/>
            <person name="Fraser C.M."/>
        </authorList>
    </citation>
    <scope>NUCLEOTIDE SEQUENCE [LARGE SCALE GENOMIC DNA]</scope>
    <source>
        <strain>F2365</strain>
    </source>
</reference>
<keyword id="KW-0067">ATP-binding</keyword>
<keyword id="KW-1003">Cell membrane</keyword>
<keyword id="KW-0406">Ion transport</keyword>
<keyword id="KW-0472">Membrane</keyword>
<keyword id="KW-0547">Nucleotide-binding</keyword>
<keyword id="KW-0630">Potassium</keyword>
<keyword id="KW-0633">Potassium transport</keyword>
<keyword id="KW-0812">Transmembrane</keyword>
<keyword id="KW-1133">Transmembrane helix</keyword>
<keyword id="KW-0813">Transport</keyword>
<protein>
    <recommendedName>
        <fullName evidence="1">Potassium-transporting ATPase KdpC subunit</fullName>
    </recommendedName>
    <alternativeName>
        <fullName evidence="1">ATP phosphohydrolase [potassium-transporting] C chain</fullName>
    </alternativeName>
    <alternativeName>
        <fullName evidence="1">Potassium-binding and translocating subunit C</fullName>
    </alternativeName>
    <alternativeName>
        <fullName evidence="1">Potassium-translocating ATPase C chain</fullName>
    </alternativeName>
</protein>
<gene>
    <name evidence="1" type="primary">kdpC</name>
    <name type="ordered locus">LMOf2365_2660</name>
</gene>